<feature type="initiator methionine" description="Removed" evidence="20">
    <location>
        <position position="1"/>
    </location>
</feature>
<feature type="chain" id="PRO_0000126117" description="Mitotic spindle assembly checkpoint protein MAD2A">
    <location>
        <begin position="2"/>
        <end position="205"/>
    </location>
</feature>
<feature type="domain" description="HORMA" evidence="1">
    <location>
        <begin position="14"/>
        <end position="197"/>
    </location>
</feature>
<feature type="region of interest" description="Required for assuming the closed conformation and for interaction with CDC20">
    <location>
        <begin position="195"/>
        <end position="205"/>
    </location>
</feature>
<feature type="modified residue" description="N-acetylalanine" evidence="20">
    <location>
        <position position="2"/>
    </location>
</feature>
<feature type="modified residue" description="Phosphoserine" evidence="24">
    <location>
        <position position="6"/>
    </location>
</feature>
<feature type="modified residue" description="Phosphoserine" evidence="24">
    <location>
        <position position="130"/>
    </location>
</feature>
<feature type="modified residue" description="Phosphoserine" evidence="7">
    <location>
        <position position="170"/>
    </location>
</feature>
<feature type="modified residue" description="Phosphoserine" evidence="7">
    <location>
        <position position="178"/>
    </location>
</feature>
<feature type="modified residue" description="Phosphoserine" evidence="24">
    <location>
        <position position="185"/>
    </location>
</feature>
<feature type="modified residue" description="Phosphoserine" evidence="7 24">
    <location>
        <position position="195"/>
    </location>
</feature>
<feature type="splice variant" id="VSP_047644" description="In isoform 2." evidence="21 22">
    <original>DWLYKCSVQKLVVVISN</original>
    <variation>VHPEKSLRKLSRMKSVQ</variation>
    <location>
        <begin position="74"/>
        <end position="90"/>
    </location>
</feature>
<feature type="splice variant" id="VSP_047645" description="In isoform 2." evidence="21 22">
    <location>
        <begin position="91"/>
        <end position="205"/>
    </location>
</feature>
<feature type="mutagenesis site" description="Leads to formation the closed conformation and homodimerization. Reduces binding to MAD1L1." evidence="12 18">
    <original>L</original>
    <variation>A</variation>
    <location>
        <position position="13"/>
    </location>
</feature>
<feature type="mutagenesis site" description="Prevents interaction with CDC20 and leads to formation of the closed conformation; when associated with A-133." evidence="12">
    <original>W</original>
    <variation>A</variation>
    <location>
        <position position="75"/>
    </location>
</feature>
<feature type="mutagenesis site" description="Prevents aggregation and promotes formation of monomeric protein that slowly interconverts between the open and closed conformation." evidence="5">
    <original>R</original>
    <variation>A</variation>
    <location>
        <position position="133"/>
    </location>
</feature>
<feature type="mutagenesis site" description="Leads to formation of the closed conformation; when associated with A-133." evidence="12">
    <original>L</original>
    <variation>A</variation>
    <location>
        <position position="153"/>
    </location>
</feature>
<feature type="mutagenesis site" description="Leads to formation of the closed conformation; when associated with A-133." evidence="12">
    <original>Y</original>
    <variation>A</variation>
    <location>
        <position position="156"/>
    </location>
</feature>
<feature type="mutagenesis site" description="Reduces phosphorylation on serine residues; when associated with A-178. Abolishes phosphorylation on serine residues; when associated with A-178 and A-195." evidence="7">
    <original>S</original>
    <variation>A</variation>
    <location>
        <position position="170"/>
    </location>
</feature>
<feature type="mutagenesis site" description="Abolishes interaction with MAD1L1 and reduces interaction with CDC20; when associated with D-178 and D-195." evidence="7">
    <original>S</original>
    <variation>D</variation>
    <location>
        <position position="170"/>
    </location>
</feature>
<feature type="mutagenesis site" description="Reduces phosphorylation on serine residues; when associated with A-170. Abolishes phosphorylation on serine residues; when associated with A-170 and A-195." evidence="7">
    <original>S</original>
    <variation>A</variation>
    <location>
        <position position="178"/>
    </location>
</feature>
<feature type="mutagenesis site" description="Abolishes interaction with MAD1L1 and reduces interaction with CDC20; when associated with D-170 and D-195." evidence="7">
    <original>S</original>
    <variation>D</variation>
    <location>
        <position position="178"/>
    </location>
</feature>
<feature type="mutagenesis site" description="Prevents formation of the closed conformation and interaction with CDC20; when associated with A-133." evidence="12">
    <original>F</original>
    <variation>A</variation>
    <location>
        <position position="186"/>
    </location>
</feature>
<feature type="mutagenesis site" description="Prevents formation of the closed conformation and interaction with CDC20; when associated with A-133." evidence="12">
    <original>T</original>
    <variation>A</variation>
    <location>
        <position position="188"/>
    </location>
</feature>
<feature type="mutagenesis site" description="Prevents formation of the closed conformation and interaction with CDC20; when associated with A-133." evidence="12">
    <original>H</original>
    <variation>A</variation>
    <location>
        <position position="191"/>
    </location>
</feature>
<feature type="mutagenesis site" description="Abolishes phosphorylation on serine residues; when associated with A-170 and A-178." evidence="7">
    <original>S</original>
    <variation>A</variation>
    <location>
        <position position="195"/>
    </location>
</feature>
<feature type="mutagenesis site" description="Binds to the N and C-terminus of MAD1L1. Abolishes interaction with MAD1L1 and reduces interaction with CDC20; when associated with D-170 and D-178." evidence="7 18">
    <original>S</original>
    <variation>D</variation>
    <location>
        <position position="195"/>
    </location>
</feature>
<feature type="mutagenesis site" description="Prevents formation of the closed conformation and interaction with CDC20; when associated with A-133." evidence="12">
    <original>V</original>
    <variation>A</variation>
    <location>
        <position position="197"/>
    </location>
</feature>
<feature type="mutagenesis site" description="Prevents formation of the closed conformation and interaction with CDC20; when associated with A-133." evidence="12">
    <original>Y</original>
    <variation>A</variation>
    <location>
        <position position="199"/>
    </location>
</feature>
<feature type="sequence conflict" description="In Ref. 8; BAD97153." evidence="23" ref="8">
    <original>S</original>
    <variation>C</variation>
    <location>
        <position position="16"/>
    </location>
</feature>
<feature type="sequence conflict" description="In Ref. 11; AAH70283." evidence="23" ref="11">
    <original>I</original>
    <variation>V</variation>
    <location>
        <position position="190"/>
    </location>
</feature>
<feature type="strand" evidence="30">
    <location>
        <begin position="2"/>
        <end position="5"/>
    </location>
</feature>
<feature type="strand" evidence="27">
    <location>
        <begin position="7"/>
        <end position="9"/>
    </location>
</feature>
<feature type="helix" evidence="30">
    <location>
        <begin position="13"/>
        <end position="34"/>
    </location>
</feature>
<feature type="helix" evidence="30">
    <location>
        <begin position="40"/>
        <end position="42"/>
    </location>
</feature>
<feature type="strand" evidence="30">
    <location>
        <begin position="43"/>
        <end position="48"/>
    </location>
</feature>
<feature type="strand" evidence="30">
    <location>
        <begin position="51"/>
        <end position="56"/>
    </location>
</feature>
<feature type="helix" evidence="30">
    <location>
        <begin position="59"/>
        <end position="77"/>
    </location>
</feature>
<feature type="strand" evidence="25">
    <location>
        <begin position="78"/>
        <end position="80"/>
    </location>
</feature>
<feature type="strand" evidence="30">
    <location>
        <begin position="81"/>
        <end position="90"/>
    </location>
</feature>
<feature type="turn" evidence="30">
    <location>
        <begin position="91"/>
        <end position="93"/>
    </location>
</feature>
<feature type="strand" evidence="30">
    <location>
        <begin position="96"/>
        <end position="106"/>
    </location>
</feature>
<feature type="helix" evidence="26">
    <location>
        <begin position="108"/>
        <end position="111"/>
    </location>
</feature>
<feature type="strand" evidence="27">
    <location>
        <begin position="116"/>
        <end position="118"/>
    </location>
</feature>
<feature type="helix" evidence="30">
    <location>
        <begin position="121"/>
        <end position="139"/>
    </location>
</feature>
<feature type="strand" evidence="30">
    <location>
        <begin position="149"/>
        <end position="157"/>
    </location>
</feature>
<feature type="helix" evidence="28">
    <location>
        <begin position="160"/>
        <end position="162"/>
    </location>
</feature>
<feature type="strand" evidence="26">
    <location>
        <begin position="167"/>
        <end position="169"/>
    </location>
</feature>
<feature type="strand" evidence="29">
    <location>
        <begin position="173"/>
        <end position="175"/>
    </location>
</feature>
<feature type="strand" evidence="30">
    <location>
        <begin position="177"/>
        <end position="182"/>
    </location>
</feature>
<feature type="strand" evidence="30">
    <location>
        <begin position="189"/>
        <end position="200"/>
    </location>
</feature>
<organism>
    <name type="scientific">Homo sapiens</name>
    <name type="common">Human</name>
    <dbReference type="NCBI Taxonomy" id="9606"/>
    <lineage>
        <taxon>Eukaryota</taxon>
        <taxon>Metazoa</taxon>
        <taxon>Chordata</taxon>
        <taxon>Craniata</taxon>
        <taxon>Vertebrata</taxon>
        <taxon>Euteleostomi</taxon>
        <taxon>Mammalia</taxon>
        <taxon>Eutheria</taxon>
        <taxon>Euarchontoglires</taxon>
        <taxon>Primates</taxon>
        <taxon>Haplorrhini</taxon>
        <taxon>Catarrhini</taxon>
        <taxon>Hominidae</taxon>
        <taxon>Homo</taxon>
    </lineage>
</organism>
<protein>
    <recommendedName>
        <fullName>Mitotic spindle assembly checkpoint protein MAD2A</fullName>
        <shortName>HsMAD2</shortName>
    </recommendedName>
    <alternativeName>
        <fullName>Mitotic arrest deficient 2-like protein 1</fullName>
        <shortName>MAD2-like protein 1</shortName>
    </alternativeName>
</protein>
<reference key="1">
    <citation type="journal article" date="1996" name="Science">
        <title>Identification of a human mitotic checkpoint gene: hsMAD2.</title>
        <authorList>
            <person name="Li Y."/>
            <person name="Benezra R."/>
        </authorList>
    </citation>
    <scope>NUCLEOTIDE SEQUENCE [MRNA] (ISOFORM 1)</scope>
</reference>
<reference key="2">
    <citation type="journal article" date="2001" name="Lung Cancer">
        <title>Genomic structure of the human MAD2 gene and mutation analysis in human lung and breast cancers.</title>
        <authorList>
            <person name="Gemma A."/>
            <person name="Hosoya Y."/>
            <person name="Seike M."/>
            <person name="Uematsu K."/>
            <person name="Kurimoto F."/>
            <person name="Hibino S."/>
            <person name="Yoshimura A."/>
            <person name="Shibuya M."/>
            <person name="Kudoh S."/>
            <person name="Emi M."/>
        </authorList>
    </citation>
    <scope>NUCLEOTIDE SEQUENCE [GENOMIC DNA]</scope>
</reference>
<reference key="3">
    <citation type="submission" date="1995-07" db="EMBL/GenBank/DDBJ databases">
        <authorList>
            <person name="Jin D.-Y."/>
            <person name="Jeang K.-T."/>
        </authorList>
    </citation>
    <scope>NUCLEOTIDE SEQUENCE [MRNA] (ISOFORM 1)</scope>
</reference>
<reference key="4">
    <citation type="submission" date="1997-10" db="EMBL/GenBank/DDBJ databases">
        <authorList>
            <person name="Klebert S."/>
            <person name="Barnikol-Watanabe S."/>
            <person name="Kratzin H.D."/>
            <person name="Hilschmann N."/>
        </authorList>
    </citation>
    <scope>NUCLEOTIDE SEQUENCE [MRNA] (ISOFORM 1)</scope>
    <source>
        <tissue>Brain</tissue>
    </source>
</reference>
<reference key="5">
    <citation type="submission" date="2001-02" db="EMBL/GenBank/DDBJ databases">
        <title>Complete human MAD2 gene.</title>
        <authorList>
            <person name="Nobori T."/>
        </authorList>
    </citation>
    <scope>NUCLEOTIDE SEQUENCE [GENOMIC DNA]</scope>
</reference>
<reference key="6">
    <citation type="submission" date="2001-06" db="EMBL/GenBank/DDBJ databases">
        <title>Identifying a new variant of MAD2L1.</title>
        <authorList>
            <person name="Yin F."/>
            <person name="Fan D.M."/>
        </authorList>
    </citation>
    <scope>NUCLEOTIDE SEQUENCE [MRNA] (ISOFORM 2)</scope>
</reference>
<reference key="7">
    <citation type="journal article" date="2004" name="Nat. Genet.">
        <title>Complete sequencing and characterization of 21,243 full-length human cDNAs.</title>
        <authorList>
            <person name="Ota T."/>
            <person name="Suzuki Y."/>
            <person name="Nishikawa T."/>
            <person name="Otsuki T."/>
            <person name="Sugiyama T."/>
            <person name="Irie R."/>
            <person name="Wakamatsu A."/>
            <person name="Hayashi K."/>
            <person name="Sato H."/>
            <person name="Nagai K."/>
            <person name="Kimura K."/>
            <person name="Makita H."/>
            <person name="Sekine M."/>
            <person name="Obayashi M."/>
            <person name="Nishi T."/>
            <person name="Shibahara T."/>
            <person name="Tanaka T."/>
            <person name="Ishii S."/>
            <person name="Yamamoto J."/>
            <person name="Saito K."/>
            <person name="Kawai Y."/>
            <person name="Isono Y."/>
            <person name="Nakamura Y."/>
            <person name="Nagahari K."/>
            <person name="Murakami K."/>
            <person name="Yasuda T."/>
            <person name="Iwayanagi T."/>
            <person name="Wagatsuma M."/>
            <person name="Shiratori A."/>
            <person name="Sudo H."/>
            <person name="Hosoiri T."/>
            <person name="Kaku Y."/>
            <person name="Kodaira H."/>
            <person name="Kondo H."/>
            <person name="Sugawara M."/>
            <person name="Takahashi M."/>
            <person name="Kanda K."/>
            <person name="Yokoi T."/>
            <person name="Furuya T."/>
            <person name="Kikkawa E."/>
            <person name="Omura Y."/>
            <person name="Abe K."/>
            <person name="Kamihara K."/>
            <person name="Katsuta N."/>
            <person name="Sato K."/>
            <person name="Tanikawa M."/>
            <person name="Yamazaki M."/>
            <person name="Ninomiya K."/>
            <person name="Ishibashi T."/>
            <person name="Yamashita H."/>
            <person name="Murakawa K."/>
            <person name="Fujimori K."/>
            <person name="Tanai H."/>
            <person name="Kimata M."/>
            <person name="Watanabe M."/>
            <person name="Hiraoka S."/>
            <person name="Chiba Y."/>
            <person name="Ishida S."/>
            <person name="Ono Y."/>
            <person name="Takiguchi S."/>
            <person name="Watanabe S."/>
            <person name="Yosida M."/>
            <person name="Hotuta T."/>
            <person name="Kusano J."/>
            <person name="Kanehori K."/>
            <person name="Takahashi-Fujii A."/>
            <person name="Hara H."/>
            <person name="Tanase T.-O."/>
            <person name="Nomura Y."/>
            <person name="Togiya S."/>
            <person name="Komai F."/>
            <person name="Hara R."/>
            <person name="Takeuchi K."/>
            <person name="Arita M."/>
            <person name="Imose N."/>
            <person name="Musashino K."/>
            <person name="Yuuki H."/>
            <person name="Oshima A."/>
            <person name="Sasaki N."/>
            <person name="Aotsuka S."/>
            <person name="Yoshikawa Y."/>
            <person name="Matsunawa H."/>
            <person name="Ichihara T."/>
            <person name="Shiohata N."/>
            <person name="Sano S."/>
            <person name="Moriya S."/>
            <person name="Momiyama H."/>
            <person name="Satoh N."/>
            <person name="Takami S."/>
            <person name="Terashima Y."/>
            <person name="Suzuki O."/>
            <person name="Nakagawa S."/>
            <person name="Senoh A."/>
            <person name="Mizoguchi H."/>
            <person name="Goto Y."/>
            <person name="Shimizu F."/>
            <person name="Wakebe H."/>
            <person name="Hishigaki H."/>
            <person name="Watanabe T."/>
            <person name="Sugiyama A."/>
            <person name="Takemoto M."/>
            <person name="Kawakami B."/>
            <person name="Yamazaki M."/>
            <person name="Watanabe K."/>
            <person name="Kumagai A."/>
            <person name="Itakura S."/>
            <person name="Fukuzumi Y."/>
            <person name="Fujimori Y."/>
            <person name="Komiyama M."/>
            <person name="Tashiro H."/>
            <person name="Tanigami A."/>
            <person name="Fujiwara T."/>
            <person name="Ono T."/>
            <person name="Yamada K."/>
            <person name="Fujii Y."/>
            <person name="Ozaki K."/>
            <person name="Hirao M."/>
            <person name="Ohmori Y."/>
            <person name="Kawabata A."/>
            <person name="Hikiji T."/>
            <person name="Kobatake N."/>
            <person name="Inagaki H."/>
            <person name="Ikema Y."/>
            <person name="Okamoto S."/>
            <person name="Okitani R."/>
            <person name="Kawakami T."/>
            <person name="Noguchi S."/>
            <person name="Itoh T."/>
            <person name="Shigeta K."/>
            <person name="Senba T."/>
            <person name="Matsumura K."/>
            <person name="Nakajima Y."/>
            <person name="Mizuno T."/>
            <person name="Morinaga M."/>
            <person name="Sasaki M."/>
            <person name="Togashi T."/>
            <person name="Oyama M."/>
            <person name="Hata H."/>
            <person name="Watanabe M."/>
            <person name="Komatsu T."/>
            <person name="Mizushima-Sugano J."/>
            <person name="Satoh T."/>
            <person name="Shirai Y."/>
            <person name="Takahashi Y."/>
            <person name="Nakagawa K."/>
            <person name="Okumura K."/>
            <person name="Nagase T."/>
            <person name="Nomura N."/>
            <person name="Kikuchi H."/>
            <person name="Masuho Y."/>
            <person name="Yamashita R."/>
            <person name="Nakai K."/>
            <person name="Yada T."/>
            <person name="Nakamura Y."/>
            <person name="Ohara O."/>
            <person name="Isogai T."/>
            <person name="Sugano S."/>
        </authorList>
    </citation>
    <scope>NUCLEOTIDE SEQUENCE [LARGE SCALE MRNA] (ISOFORMS 1 AND 2)</scope>
    <source>
        <tissue>Lung</tissue>
    </source>
</reference>
<reference key="8">
    <citation type="submission" date="2005-04" db="EMBL/GenBank/DDBJ databases">
        <authorList>
            <person name="Totoki Y."/>
            <person name="Toyoda A."/>
            <person name="Takeda T."/>
            <person name="Sakaki Y."/>
            <person name="Tanaka A."/>
            <person name="Yokoyama S."/>
        </authorList>
    </citation>
    <scope>NUCLEOTIDE SEQUENCE [LARGE SCALE MRNA] (ISOFORM 1)</scope>
    <source>
        <tissue>Testis</tissue>
    </source>
</reference>
<reference key="9">
    <citation type="journal article" date="2005" name="Nature">
        <title>Generation and annotation of the DNA sequences of human chromosomes 2 and 4.</title>
        <authorList>
            <person name="Hillier L.W."/>
            <person name="Graves T.A."/>
            <person name="Fulton R.S."/>
            <person name="Fulton L.A."/>
            <person name="Pepin K.H."/>
            <person name="Minx P."/>
            <person name="Wagner-McPherson C."/>
            <person name="Layman D."/>
            <person name="Wylie K."/>
            <person name="Sekhon M."/>
            <person name="Becker M.C."/>
            <person name="Fewell G.A."/>
            <person name="Delehaunty K.D."/>
            <person name="Miner T.L."/>
            <person name="Nash W.E."/>
            <person name="Kremitzki C."/>
            <person name="Oddy L."/>
            <person name="Du H."/>
            <person name="Sun H."/>
            <person name="Bradshaw-Cordum H."/>
            <person name="Ali J."/>
            <person name="Carter J."/>
            <person name="Cordes M."/>
            <person name="Harris A."/>
            <person name="Isak A."/>
            <person name="van Brunt A."/>
            <person name="Nguyen C."/>
            <person name="Du F."/>
            <person name="Courtney L."/>
            <person name="Kalicki J."/>
            <person name="Ozersky P."/>
            <person name="Abbott S."/>
            <person name="Armstrong J."/>
            <person name="Belter E.A."/>
            <person name="Caruso L."/>
            <person name="Cedroni M."/>
            <person name="Cotton M."/>
            <person name="Davidson T."/>
            <person name="Desai A."/>
            <person name="Elliott G."/>
            <person name="Erb T."/>
            <person name="Fronick C."/>
            <person name="Gaige T."/>
            <person name="Haakenson W."/>
            <person name="Haglund K."/>
            <person name="Holmes A."/>
            <person name="Harkins R."/>
            <person name="Kim K."/>
            <person name="Kruchowski S.S."/>
            <person name="Strong C.M."/>
            <person name="Grewal N."/>
            <person name="Goyea E."/>
            <person name="Hou S."/>
            <person name="Levy A."/>
            <person name="Martinka S."/>
            <person name="Mead K."/>
            <person name="McLellan M.D."/>
            <person name="Meyer R."/>
            <person name="Randall-Maher J."/>
            <person name="Tomlinson C."/>
            <person name="Dauphin-Kohlberg S."/>
            <person name="Kozlowicz-Reilly A."/>
            <person name="Shah N."/>
            <person name="Swearengen-Shahid S."/>
            <person name="Snider J."/>
            <person name="Strong J.T."/>
            <person name="Thompson J."/>
            <person name="Yoakum M."/>
            <person name="Leonard S."/>
            <person name="Pearman C."/>
            <person name="Trani L."/>
            <person name="Radionenko M."/>
            <person name="Waligorski J.E."/>
            <person name="Wang C."/>
            <person name="Rock S.M."/>
            <person name="Tin-Wollam A.-M."/>
            <person name="Maupin R."/>
            <person name="Latreille P."/>
            <person name="Wendl M.C."/>
            <person name="Yang S.-P."/>
            <person name="Pohl C."/>
            <person name="Wallis J.W."/>
            <person name="Spieth J."/>
            <person name="Bieri T.A."/>
            <person name="Berkowicz N."/>
            <person name="Nelson J.O."/>
            <person name="Osborne J."/>
            <person name="Ding L."/>
            <person name="Meyer R."/>
            <person name="Sabo A."/>
            <person name="Shotland Y."/>
            <person name="Sinha P."/>
            <person name="Wohldmann P.E."/>
            <person name="Cook L.L."/>
            <person name="Hickenbotham M.T."/>
            <person name="Eldred J."/>
            <person name="Williams D."/>
            <person name="Jones T.A."/>
            <person name="She X."/>
            <person name="Ciccarelli F.D."/>
            <person name="Izaurralde E."/>
            <person name="Taylor J."/>
            <person name="Schmutz J."/>
            <person name="Myers R.M."/>
            <person name="Cox D.R."/>
            <person name="Huang X."/>
            <person name="McPherson J.D."/>
            <person name="Mardis E.R."/>
            <person name="Clifton S.W."/>
            <person name="Warren W.C."/>
            <person name="Chinwalla A.T."/>
            <person name="Eddy S.R."/>
            <person name="Marra M.A."/>
            <person name="Ovcharenko I."/>
            <person name="Furey T.S."/>
            <person name="Miller W."/>
            <person name="Eichler E.E."/>
            <person name="Bork P."/>
            <person name="Suyama M."/>
            <person name="Torrents D."/>
            <person name="Waterston R.H."/>
            <person name="Wilson R.K."/>
        </authorList>
    </citation>
    <scope>NUCLEOTIDE SEQUENCE [LARGE SCALE GENOMIC DNA]</scope>
</reference>
<reference key="10">
    <citation type="submission" date="2005-09" db="EMBL/GenBank/DDBJ databases">
        <authorList>
            <person name="Mural R.J."/>
            <person name="Istrail S."/>
            <person name="Sutton G.G."/>
            <person name="Florea L."/>
            <person name="Halpern A.L."/>
            <person name="Mobarry C.M."/>
            <person name="Lippert R."/>
            <person name="Walenz B."/>
            <person name="Shatkay H."/>
            <person name="Dew I."/>
            <person name="Miller J.R."/>
            <person name="Flanigan M.J."/>
            <person name="Edwards N.J."/>
            <person name="Bolanos R."/>
            <person name="Fasulo D."/>
            <person name="Halldorsson B.V."/>
            <person name="Hannenhalli S."/>
            <person name="Turner R."/>
            <person name="Yooseph S."/>
            <person name="Lu F."/>
            <person name="Nusskern D.R."/>
            <person name="Shue B.C."/>
            <person name="Zheng X.H."/>
            <person name="Zhong F."/>
            <person name="Delcher A.L."/>
            <person name="Huson D.H."/>
            <person name="Kravitz S.A."/>
            <person name="Mouchard L."/>
            <person name="Reinert K."/>
            <person name="Remington K.A."/>
            <person name="Clark A.G."/>
            <person name="Waterman M.S."/>
            <person name="Eichler E.E."/>
            <person name="Adams M.D."/>
            <person name="Hunkapiller M.W."/>
            <person name="Myers E.W."/>
            <person name="Venter J.C."/>
        </authorList>
    </citation>
    <scope>NUCLEOTIDE SEQUENCE [LARGE SCALE GENOMIC DNA]</scope>
</reference>
<reference key="11">
    <citation type="journal article" date="2004" name="Genome Res.">
        <title>The status, quality, and expansion of the NIH full-length cDNA project: the Mammalian Gene Collection (MGC).</title>
        <authorList>
            <consortium name="The MGC Project Team"/>
        </authorList>
    </citation>
    <scope>NUCLEOTIDE SEQUENCE [LARGE SCALE MRNA] (ISOFORM 1)</scope>
    <source>
        <tissue>Bone marrow</tissue>
        <tissue>Muscle</tissue>
    </source>
</reference>
<reference key="12">
    <citation type="submission" date="2008-02" db="UniProtKB">
        <authorList>
            <person name="Bienvenut W.V."/>
            <person name="Dhillon A.S."/>
            <person name="Kolch W."/>
        </authorList>
    </citation>
    <scope>PROTEIN SEQUENCE OF 2-7; 36-45; 123-129 AND 193-205</scope>
    <scope>CLEAVAGE OF INITIATOR METHIONINE</scope>
    <scope>ACETYLATION AT ALA-2</scope>
    <scope>IDENTIFICATION BY MASS SPECTROMETRY</scope>
    <source>
        <tissue>Hepatoma</tissue>
    </source>
</reference>
<reference key="13">
    <citation type="journal article" date="1998" name="Genes Dev.">
        <title>The checkpoint protein MAD2 and the mitotic regulator CDC20 form a ternary complex with the anaphase-promoting complex to control anaphase initiation.</title>
        <authorList>
            <person name="Fang G."/>
            <person name="Yu H."/>
            <person name="Kirschner M.W."/>
        </authorList>
    </citation>
    <scope>INTERACTION WITH CDC20</scope>
</reference>
<reference key="14">
    <citation type="journal article" date="1999" name="Biochem. J.">
        <title>Evidence for an interaction of the metalloprotease-disintegrin tumour necrosis factor alpha convertase (TACE) with mitotic arrest deficient 2 (MAD2), and of the metalloprotease-disintegrin MDC9 with a novel MAD2-related protein, MAD2-beta.</title>
        <authorList>
            <person name="Nelson K.K."/>
            <person name="Schlondorff J."/>
            <person name="Blobel C.P."/>
        </authorList>
    </citation>
    <scope>INTERACTION WITH ADAM17</scope>
</reference>
<reference key="15">
    <citation type="journal article" date="2002" name="EMBO J.">
        <title>Identification of a MAD2-binding protein, CMT2, and its role in mitosis.</title>
        <authorList>
            <person name="Habu T."/>
            <person name="Kim S.H."/>
            <person name="Weinstein J."/>
            <person name="Matsumoto T."/>
        </authorList>
    </citation>
    <scope>INTERACTION WITH MAD2L1BP</scope>
</reference>
<reference key="16">
    <citation type="journal article" date="2003" name="EMBO J.">
        <title>Mad2 phosphorylation regulates its association with Mad1 and the APC/C.</title>
        <authorList>
            <person name="Wassmann K."/>
            <person name="Liberal V."/>
            <person name="Benezra R."/>
        </authorList>
    </citation>
    <scope>PHOSPHORYLATION AT SER-170; SER-178 AND SER-195</scope>
    <scope>INTERACTION WITH MAD1L1 AND CDC20</scope>
    <scope>MUTAGENESIS OF SER-170; SER-178 AND SER-195</scope>
</reference>
<reference key="17">
    <citation type="journal article" date="2004" name="J. Biol. Chem.">
        <title>NEK2A interacts with MAD1 and possibly functions as a novel integrator of the spindle checkpoint signaling.</title>
        <authorList>
            <person name="Lou Y."/>
            <person name="Yao J."/>
            <person name="Zereshki A."/>
            <person name="Dou Z."/>
            <person name="Ahmed K."/>
            <person name="Wang H."/>
            <person name="Hu J."/>
            <person name="Wang Y."/>
            <person name="Yao X."/>
        </authorList>
    </citation>
    <scope>SUBCELLULAR LOCATION</scope>
</reference>
<reference key="18">
    <citation type="journal article" date="2004" name="J. Cell Sci.">
        <title>Bub1 is required for kinetochore localization of BubR1, Cenp-E, Cenp-F and Mad2, and chromosome congression.</title>
        <authorList>
            <person name="Johnson V.L."/>
            <person name="Scott M.I."/>
            <person name="Holt S.V."/>
            <person name="Hussein D."/>
            <person name="Taylor S.S."/>
        </authorList>
    </citation>
    <scope>SUBCELLULAR LOCATION</scope>
</reference>
<reference key="19">
    <citation type="journal article" date="2006" name="J. Biol. Chem.">
        <title>FAT10 plays a role in the regulation of chromosomal stability.</title>
        <authorList>
            <person name="Ren J."/>
            <person name="Kan A."/>
            <person name="Leong S.H."/>
            <person name="Ooi L.L.P.J."/>
            <person name="Jeang K.-T."/>
            <person name="Chong S.S."/>
            <person name="Kon O.L."/>
            <person name="Lee C.G.L."/>
        </authorList>
    </citation>
    <scope>SUBCELLULAR LOCATION</scope>
    <scope>INTERACTION WITH UBD</scope>
</reference>
<reference key="20">
    <citation type="journal article" date="2008" name="Cancer Res.">
        <title>HSF1 as a mitotic regulator: phosphorylation of HSF1 by Plk1 is essential for mitotic progression.</title>
        <authorList>
            <person name="Lee Y.J."/>
            <person name="Kim E.H."/>
            <person name="Lee J.S."/>
            <person name="Jeoung D."/>
            <person name="Bae S."/>
            <person name="Kwon S.H."/>
            <person name="Lee Y.S."/>
        </authorList>
    </citation>
    <scope>INTERACTION WITH HSF1</scope>
</reference>
<reference key="21">
    <citation type="journal article" date="2008" name="Cancer Res.">
        <title>Role of a novel splice variant of mitotic arrest deficient 1 (MAD1), MAD1beta, in mitotic checkpoint control in liver cancer.</title>
        <authorList>
            <person name="Sze K.M."/>
            <person name="Ching Y.P."/>
            <person name="Jin D.Y."/>
            <person name="Ng I.O."/>
        </authorList>
    </citation>
    <scope>INTERACTION WITH MAD1L1</scope>
    <scope>SUBCELLULAR LOCATION</scope>
</reference>
<reference key="22">
    <citation type="journal article" date="2008" name="Genes Dev.">
        <title>Tpr directly binds to Mad1 and Mad2 and is important for the Mad1-Mad2-mediated mitotic spindle checkpoint.</title>
        <authorList>
            <person name="Lee S.H."/>
            <person name="Sterling H."/>
            <person name="Burlingame A."/>
            <person name="McCormick F."/>
        </authorList>
    </citation>
    <scope>INTERACTION WITH TPR; MAD1L1 AND CDC20</scope>
    <scope>SUBCELLULAR LOCATION</scope>
</reference>
<reference key="23">
    <citation type="journal article" date="2008" name="J. Cell. Biochem.">
        <title>Perturbation of the chromosomal binding of RCC1, Mad2 and survivin causes spindle assembly defects and mitotic catastrophe.</title>
        <authorList>
            <person name="Ho C.-Y."/>
            <person name="Wong C.-H."/>
            <person name="Li H.-Y."/>
        </authorList>
    </citation>
    <scope>SUBCELLULAR LOCATION</scope>
</reference>
<reference key="24">
    <citation type="journal article" date="2008" name="J. Cell Biol.">
        <title>The Mad2 partial unfolding model: regulating mitosis through Mad2 conformational switching.</title>
        <authorList>
            <person name="Skinner J.J."/>
            <person name="Wood S."/>
            <person name="Shorter J."/>
            <person name="Englander S.W."/>
            <person name="Black B.E."/>
        </authorList>
    </citation>
    <scope>REVIEW</scope>
</reference>
<reference key="25">
    <citation type="journal article" date="2010" name="Exp. Mol. Pathol.">
        <title>Nek2 targets the mitotic checkpoint proteins Mad2 and Cdc20: a mechanism for aneuploidy in cancer.</title>
        <authorList>
            <person name="Liu Q."/>
            <person name="Hirohashi Y."/>
            <person name="Du X."/>
            <person name="Greene M.I."/>
            <person name="Wang Q."/>
        </authorList>
    </citation>
    <scope>SUBCELLULAR LOCATION</scope>
    <scope>PHOSPHORYLATION</scope>
    <scope>INTERACTION WITH NEK2</scope>
</reference>
<reference key="26">
    <citation type="journal article" date="2011" name="BMC Syst. Biol.">
        <title>Initial characterization of the human central proteome.</title>
        <authorList>
            <person name="Burkard T.R."/>
            <person name="Planyavsky M."/>
            <person name="Kaupe I."/>
            <person name="Breitwieser F.P."/>
            <person name="Buerckstuemmer T."/>
            <person name="Bennett K.L."/>
            <person name="Superti-Furga G."/>
            <person name="Colinge J."/>
        </authorList>
    </citation>
    <scope>IDENTIFICATION BY MASS SPECTROMETRY [LARGE SCALE ANALYSIS]</scope>
</reference>
<reference key="27">
    <citation type="journal article" date="2013" name="J. Proteome Res.">
        <title>Toward a comprehensive characterization of a human cancer cell phosphoproteome.</title>
        <authorList>
            <person name="Zhou H."/>
            <person name="Di Palma S."/>
            <person name="Preisinger C."/>
            <person name="Peng M."/>
            <person name="Polat A.N."/>
            <person name="Heck A.J."/>
            <person name="Mohammed S."/>
        </authorList>
    </citation>
    <scope>PHOSPHORYLATION [LARGE SCALE ANALYSIS] AT SER-6; SER-130; SER-185 AND SER-195</scope>
    <scope>IDENTIFICATION BY MASS SPECTROMETRY [LARGE SCALE ANALYSIS]</scope>
    <source>
        <tissue>Cervix carcinoma</tissue>
        <tissue>Erythroleukemia</tissue>
    </source>
</reference>
<reference key="28">
    <citation type="journal article" date="2014" name="Proc. Natl. Acad. Sci. U.S.A.">
        <title>Disruption of FAT10-MAD2 binding inhibits tumor progression.</title>
        <authorList>
            <person name="Theng S.S."/>
            <person name="Wang W."/>
            <person name="Mah W.C."/>
            <person name="Chan C."/>
            <person name="Zhuo J."/>
            <person name="Gao Y."/>
            <person name="Qin H."/>
            <person name="Lim L."/>
            <person name="Chong S.S."/>
            <person name="Song J."/>
            <person name="Lee C.G."/>
        </authorList>
    </citation>
    <scope>INTERACTION WITH UBD</scope>
</reference>
<reference key="29">
    <citation type="journal article" date="2018" name="J. Biol. Chem.">
        <title>Direct interactions of mitotic arrest deficient 1 (MAD1) domains with each other and MAD2 conformers are required for mitotic checkpoint signaling.</title>
        <authorList>
            <person name="Ji W."/>
            <person name="Luo Y."/>
            <person name="Ahmad E."/>
            <person name="Liu S.T."/>
        </authorList>
    </citation>
    <scope>FUNCTION</scope>
    <scope>INTERACTION WITH MAD1L1; CDC20; BUB1B AND TTK</scope>
    <scope>MUTAGENESIS OF LEU-13 AND SER-195</scope>
</reference>
<reference key="30">
    <citation type="journal article" date="2000" name="Nat. Struct. Biol.">
        <title>Structure of the Mad2 spindle assembly checkpoint protein and its interaction with Cdc20.</title>
        <authorList>
            <person name="Luo X."/>
            <person name="Fang G."/>
            <person name="Coldiron M."/>
            <person name="Lin Y."/>
            <person name="Yu H."/>
            <person name="Kirschner M.W."/>
            <person name="Wagner G."/>
        </authorList>
    </citation>
    <scope>STRUCTURE BY NMR OF 11-195</scope>
    <scope>FUNCTION</scope>
    <scope>DOMAIN</scope>
    <scope>INTERACTION WITH CDC20</scope>
</reference>
<reference key="31">
    <citation type="journal article" date="2002" name="EMBO J.">
        <title>Crystal structure of the tetrameric Mad1-Mad2 core complex: implications of a 'safety belt' binding mechanism for the spindle checkpoint.</title>
        <authorList>
            <person name="Sironi L."/>
            <person name="Mapelli M."/>
            <person name="Knapp S."/>
            <person name="De Antoni A."/>
            <person name="Jeang K.-T."/>
            <person name="Musacchio A."/>
        </authorList>
    </citation>
    <scope>X-RAY CRYSTALLOGRAPHY (2.05 ANGSTROMS) OF MUTANT ALA-133 IN COMPLEX WITH MAD1L1</scope>
    <scope>SUBUNIT</scope>
    <scope>DOMAIN</scope>
    <scope>MUTAGENESIS OF ARG-133</scope>
    <scope>INTERACTION WITH MAD1L1</scope>
</reference>
<reference key="32">
    <citation type="journal article" date="2002" name="Mol. Cell">
        <title>The Mad2 spindle checkpoint protein undergoes similar major conformational changes upon binding to either Mad1 or Cdc20.</title>
        <authorList>
            <person name="Luo X."/>
            <person name="Tang Z."/>
            <person name="Rizo J."/>
            <person name="Yu H."/>
        </authorList>
    </citation>
    <scope>STRUCTURE BY NMR OF 11-205 IN COMPLEX WITH PEPTIDE LIGAND</scope>
    <scope>DOMAIN</scope>
    <scope>SUBCELLULAR LOCATION</scope>
    <scope>FUNCTION</scope>
    <scope>INTERACTION WITH CDC20 AND MAD1L1</scope>
</reference>
<reference key="33">
    <citation type="journal article" date="2004" name="Nat. Struct. Mol. Biol.">
        <title>The Mad2 spindle checkpoint protein has two distinct natively folded states.</title>
        <authorList>
            <person name="Luo X."/>
            <person name="Tang Z."/>
            <person name="Xia G."/>
            <person name="Wassmann K."/>
            <person name="Matsumoto T."/>
            <person name="Rizo J."/>
            <person name="Yu H."/>
        </authorList>
    </citation>
    <scope>STRUCTURE BY NMR</scope>
    <scope>DOMAIN</scope>
    <scope>SUBUNIT</scope>
    <scope>FUNCTION</scope>
    <scope>INTERACTION WITH MAD1L1</scope>
    <scope>IDENTIFICATION BY MASS SPECTROMETRY</scope>
</reference>
<reference key="34">
    <citation type="journal article" date="2007" name="Cell">
        <title>The Mad2 conformational dimer: structure and implications for the spindle assembly checkpoint.</title>
        <authorList>
            <person name="Mapelli M."/>
            <person name="Massimiliano L."/>
            <person name="Santaguida S."/>
            <person name="Musacchio A."/>
        </authorList>
    </citation>
    <scope>X-RAY CRYSTALLOGRAPHY (2.9 ANGSTROMS) OF DIMER CONTAINING BOTH CONFORMERS</scope>
    <scope>INTERACTION OF THE TWO MAD2L1 CONFORMERS</scope>
</reference>
<reference key="35">
    <citation type="journal article" date="2007" name="Cell">
        <title>p31comet blocks Mad2 activation through structural mimicry.</title>
        <authorList>
            <person name="Yang M."/>
            <person name="Li B."/>
            <person name="Tomchick D.R."/>
            <person name="Machius M."/>
            <person name="Rizo J."/>
            <person name="Yu H."/>
            <person name="Luo X."/>
        </authorList>
    </citation>
    <scope>X-RAY CRYSTALLOGRAPHY (2.3 ANGSTROMS) OF COMPLEXES WITH MAD2L1BP</scope>
    <scope>INTERACTION WITH MAD2L1BP</scope>
</reference>
<reference key="36">
    <citation type="journal article" date="2008" name="PLoS Biol.">
        <title>Insights into Mad2 regulation in the spindle checkpoint revealed by the crystal structure of the symmetric Mad2 dimer.</title>
        <authorList>
            <person name="Yang M."/>
            <person name="Li B."/>
            <person name="Liu C.-J."/>
            <person name="Tomchick D.R."/>
            <person name="Machius M."/>
            <person name="Rizo J."/>
            <person name="Yu H."/>
            <person name="Luo X."/>
        </authorList>
    </citation>
    <scope>X-RAY CRYSTALLOGRAPHY (1.95 ANGSTROMS) OF HOMODIMER OF MUTANT ALA-13 IN THE CLOSED CONFORMATION</scope>
    <scope>DOMAIN</scope>
    <scope>SUBUNIT</scope>
    <scope>MUTAGENESIS OF LEU-13; TRP-75; LEU-153; TYR-156; PHE-186; THR-188; HIS-191; VAL-197 AND TYR-199</scope>
</reference>
<name>MD2L1_HUMAN</name>
<sequence length="205" mass="23510">MALQLSREQGITLRGSAEIVAEFFSFGINSILYQRGIYPSETFTRVQKYGLTLLVTTDLELIKYLNNVVEQLKDWLYKCSVQKLVVVISNIESGEVLERWQFDIECDKTAKDDSAPREKSQKAIQDEIRSVIRQITATVTFLPLLEVSCSFDLLIYTDKDLVVPEKWEESGPQFITNSEEVRLRSFTTTIHKVNSMVAYKIPVND</sequence>
<evidence type="ECO:0000255" key="1">
    <source>
        <dbReference type="PROSITE-ProRule" id="PRU00109"/>
    </source>
</evidence>
<evidence type="ECO:0000269" key="2">
    <source>
    </source>
</evidence>
<evidence type="ECO:0000269" key="3">
    <source>
    </source>
</evidence>
<evidence type="ECO:0000269" key="4">
    <source>
    </source>
</evidence>
<evidence type="ECO:0000269" key="5">
    <source>
    </source>
</evidence>
<evidence type="ECO:0000269" key="6">
    <source>
    </source>
</evidence>
<evidence type="ECO:0000269" key="7">
    <source>
    </source>
</evidence>
<evidence type="ECO:0000269" key="8">
    <source>
    </source>
</evidence>
<evidence type="ECO:0000269" key="9">
    <source>
    </source>
</evidence>
<evidence type="ECO:0000269" key="10">
    <source>
    </source>
</evidence>
<evidence type="ECO:0000269" key="11">
    <source>
    </source>
</evidence>
<evidence type="ECO:0000269" key="12">
    <source>
    </source>
</evidence>
<evidence type="ECO:0000269" key="13">
    <source>
    </source>
</evidence>
<evidence type="ECO:0000269" key="14">
    <source>
    </source>
</evidence>
<evidence type="ECO:0000269" key="15">
    <source>
    </source>
</evidence>
<evidence type="ECO:0000269" key="16">
    <source>
    </source>
</evidence>
<evidence type="ECO:0000269" key="17">
    <source>
    </source>
</evidence>
<evidence type="ECO:0000269" key="18">
    <source>
    </source>
</evidence>
<evidence type="ECO:0000269" key="19">
    <source>
    </source>
</evidence>
<evidence type="ECO:0000269" key="20">
    <source ref="12"/>
</evidence>
<evidence type="ECO:0000303" key="21">
    <source>
    </source>
</evidence>
<evidence type="ECO:0000303" key="22">
    <source ref="6"/>
</evidence>
<evidence type="ECO:0000305" key="23"/>
<evidence type="ECO:0007744" key="24">
    <source>
    </source>
</evidence>
<evidence type="ECO:0007829" key="25">
    <source>
        <dbReference type="PDB" id="1DUJ"/>
    </source>
</evidence>
<evidence type="ECO:0007829" key="26">
    <source>
        <dbReference type="PDB" id="1GO4"/>
    </source>
</evidence>
<evidence type="ECO:0007829" key="27">
    <source>
        <dbReference type="PDB" id="1S2H"/>
    </source>
</evidence>
<evidence type="ECO:0007829" key="28">
    <source>
        <dbReference type="PDB" id="2QYF"/>
    </source>
</evidence>
<evidence type="ECO:0007829" key="29">
    <source>
        <dbReference type="PDB" id="2V64"/>
    </source>
</evidence>
<evidence type="ECO:0007829" key="30">
    <source>
        <dbReference type="PDB" id="2VFX"/>
    </source>
</evidence>
<dbReference type="EMBL" id="U65410">
    <property type="protein sequence ID" value="AAC50781.1"/>
    <property type="molecule type" value="mRNA"/>
</dbReference>
<dbReference type="EMBL" id="AF202273">
    <property type="protein sequence ID" value="AAK38174.1"/>
    <property type="molecule type" value="Genomic_DNA"/>
</dbReference>
<dbReference type="EMBL" id="AF202269">
    <property type="protein sequence ID" value="AAK38174.1"/>
    <property type="status" value="JOINED"/>
    <property type="molecule type" value="Genomic_DNA"/>
</dbReference>
<dbReference type="EMBL" id="AF202270">
    <property type="protein sequence ID" value="AAK38174.1"/>
    <property type="status" value="JOINED"/>
    <property type="molecule type" value="Genomic_DNA"/>
</dbReference>
<dbReference type="EMBL" id="AF202271">
    <property type="protein sequence ID" value="AAK38174.1"/>
    <property type="status" value="JOINED"/>
    <property type="molecule type" value="Genomic_DNA"/>
</dbReference>
<dbReference type="EMBL" id="AF202272">
    <property type="protein sequence ID" value="AAK38174.1"/>
    <property type="status" value="JOINED"/>
    <property type="molecule type" value="Genomic_DNA"/>
</dbReference>
<dbReference type="EMBL" id="U31278">
    <property type="protein sequence ID" value="AAC52060.1"/>
    <property type="molecule type" value="mRNA"/>
</dbReference>
<dbReference type="EMBL" id="AJ000186">
    <property type="protein sequence ID" value="CAA03943.1"/>
    <property type="molecule type" value="mRNA"/>
</dbReference>
<dbReference type="EMBL" id="AB056160">
    <property type="protein sequence ID" value="BAB63410.1"/>
    <property type="molecule type" value="Genomic_DNA"/>
</dbReference>
<dbReference type="EMBL" id="AF394735">
    <property type="protein sequence ID" value="AAN74648.1"/>
    <property type="molecule type" value="mRNA"/>
</dbReference>
<dbReference type="EMBL" id="AK298228">
    <property type="protein sequence ID" value="BAG60497.1"/>
    <property type="molecule type" value="mRNA"/>
</dbReference>
<dbReference type="EMBL" id="AK313827">
    <property type="protein sequence ID" value="BAG36562.1"/>
    <property type="molecule type" value="mRNA"/>
</dbReference>
<dbReference type="EMBL" id="AK223433">
    <property type="protein sequence ID" value="BAD97153.1"/>
    <property type="molecule type" value="mRNA"/>
</dbReference>
<dbReference type="EMBL" id="AC097173">
    <property type="protein sequence ID" value="AAY40945.1"/>
    <property type="molecule type" value="Genomic_DNA"/>
</dbReference>
<dbReference type="EMBL" id="CH471056">
    <property type="protein sequence ID" value="EAX05271.1"/>
    <property type="molecule type" value="Genomic_DNA"/>
</dbReference>
<dbReference type="EMBL" id="CH471056">
    <property type="protein sequence ID" value="EAX05273.1"/>
    <property type="molecule type" value="Genomic_DNA"/>
</dbReference>
<dbReference type="EMBL" id="BC000356">
    <property type="protein sequence ID" value="AAH00356.1"/>
    <property type="molecule type" value="mRNA"/>
</dbReference>
<dbReference type="EMBL" id="BC005945">
    <property type="protein sequence ID" value="AAH05945.1"/>
    <property type="molecule type" value="mRNA"/>
</dbReference>
<dbReference type="EMBL" id="BC070283">
    <property type="protein sequence ID" value="AAH70283.1"/>
    <property type="molecule type" value="mRNA"/>
</dbReference>
<dbReference type="CCDS" id="CCDS3715.1">
    <molecule id="Q13257-1"/>
</dbReference>
<dbReference type="PIR" id="G01942">
    <property type="entry name" value="G01942"/>
</dbReference>
<dbReference type="RefSeq" id="NP_002349.1">
    <molecule id="Q13257-1"/>
    <property type="nucleotide sequence ID" value="NM_002358.4"/>
</dbReference>
<dbReference type="PDB" id="1DUJ">
    <property type="method" value="NMR"/>
    <property type="chains" value="A=11-195"/>
</dbReference>
<dbReference type="PDB" id="1GO4">
    <property type="method" value="X-ray"/>
    <property type="resolution" value="2.05 A"/>
    <property type="chains" value="A/B/C/D=1-205"/>
</dbReference>
<dbReference type="PDB" id="1KLQ">
    <property type="method" value="NMR"/>
    <property type="chains" value="A=11-205"/>
</dbReference>
<dbReference type="PDB" id="1S2H">
    <property type="method" value="NMR"/>
    <property type="chains" value="A=1-205"/>
</dbReference>
<dbReference type="PDB" id="2QYF">
    <property type="method" value="X-ray"/>
    <property type="resolution" value="2.30 A"/>
    <property type="chains" value="A/C=1-205"/>
</dbReference>
<dbReference type="PDB" id="2V64">
    <property type="method" value="X-ray"/>
    <property type="resolution" value="2.90 A"/>
    <property type="chains" value="A/C/D/E/F/H=2-205"/>
</dbReference>
<dbReference type="PDB" id="2VFX">
    <property type="method" value="X-ray"/>
    <property type="resolution" value="1.95 A"/>
    <property type="chains" value="A/B/C/D/E/F/G/H/I/J/K/L=1-205"/>
</dbReference>
<dbReference type="PDB" id="3GMH">
    <property type="method" value="X-ray"/>
    <property type="resolution" value="3.95 A"/>
    <property type="chains" value="A/B/C/D/E/F/G/H/I/J/K/L=11-205"/>
</dbReference>
<dbReference type="PDB" id="5KHU">
    <property type="method" value="EM"/>
    <property type="resolution" value="4.80 A"/>
    <property type="chains" value="T=1-205"/>
</dbReference>
<dbReference type="PDB" id="5LCW">
    <property type="method" value="EM"/>
    <property type="resolution" value="4.00 A"/>
    <property type="chains" value="Z=1-205"/>
</dbReference>
<dbReference type="PDB" id="6F0X">
    <property type="method" value="EM"/>
    <property type="resolution" value="4.60 A"/>
    <property type="chains" value="Z=1-205"/>
</dbReference>
<dbReference type="PDB" id="6TLJ">
    <property type="method" value="EM"/>
    <property type="resolution" value="3.80 A"/>
    <property type="chains" value="Z=1-205"/>
</dbReference>
<dbReference type="PDBsum" id="1DUJ"/>
<dbReference type="PDBsum" id="1GO4"/>
<dbReference type="PDBsum" id="1KLQ"/>
<dbReference type="PDBsum" id="1S2H"/>
<dbReference type="PDBsum" id="2QYF"/>
<dbReference type="PDBsum" id="2V64"/>
<dbReference type="PDBsum" id="2VFX"/>
<dbReference type="PDBsum" id="3GMH"/>
<dbReference type="PDBsum" id="5KHU"/>
<dbReference type="PDBsum" id="5LCW"/>
<dbReference type="PDBsum" id="6F0X"/>
<dbReference type="PDBsum" id="6TLJ"/>
<dbReference type="BMRB" id="Q13257"/>
<dbReference type="EMDB" id="EMD-10516"/>
<dbReference type="EMDB" id="EMD-4037"/>
<dbReference type="EMDB" id="EMD-4166"/>
<dbReference type="SMR" id="Q13257"/>
<dbReference type="BioGRID" id="110260">
    <property type="interactions" value="272"/>
</dbReference>
<dbReference type="ComplexPortal" id="CPX-3946">
    <property type="entry name" value="Mitotic Checkpoint Complex"/>
</dbReference>
<dbReference type="ComplexPortal" id="CPX-85">
    <property type="entry name" value="Mitotic spindle assembly checkpoint MAD1-MAD2 complex"/>
</dbReference>
<dbReference type="ComplexPortal" id="CPX-88">
    <property type="entry name" value="Mitotic spindle assembly checkpoint complex MAD2"/>
</dbReference>
<dbReference type="CORUM" id="Q13257"/>
<dbReference type="DIP" id="DIP-29653N"/>
<dbReference type="FunCoup" id="Q13257">
    <property type="interactions" value="2757"/>
</dbReference>
<dbReference type="IntAct" id="Q13257">
    <property type="interactions" value="199"/>
</dbReference>
<dbReference type="MINT" id="Q13257"/>
<dbReference type="STRING" id="9606.ENSP00000296509"/>
<dbReference type="GlyGen" id="Q13257">
    <property type="glycosylation" value="1 site"/>
</dbReference>
<dbReference type="iPTMnet" id="Q13257"/>
<dbReference type="PhosphoSitePlus" id="Q13257"/>
<dbReference type="SwissPalm" id="Q13257"/>
<dbReference type="BioMuta" id="MAD2L1"/>
<dbReference type="DMDM" id="12230256"/>
<dbReference type="jPOST" id="Q13257"/>
<dbReference type="MassIVE" id="Q13257"/>
<dbReference type="PaxDb" id="9606-ENSP00000296509"/>
<dbReference type="PeptideAtlas" id="Q13257"/>
<dbReference type="ProteomicsDB" id="59256">
    <molecule id="Q13257-1"/>
</dbReference>
<dbReference type="ProteomicsDB" id="71439"/>
<dbReference type="Pumba" id="Q13257"/>
<dbReference type="TopDownProteomics" id="Q13257-1">
    <molecule id="Q13257-1"/>
</dbReference>
<dbReference type="ABCD" id="Q13257">
    <property type="antibodies" value="2 sequenced antibodies"/>
</dbReference>
<dbReference type="Antibodypedia" id="15732">
    <property type="antibodies" value="612 antibodies from 46 providers"/>
</dbReference>
<dbReference type="DNASU" id="4085"/>
<dbReference type="Ensembl" id="ENST00000296509.11">
    <molecule id="Q13257-1"/>
    <property type="protein sequence ID" value="ENSP00000296509.5"/>
    <property type="gene ID" value="ENSG00000164109.14"/>
</dbReference>
<dbReference type="Ensembl" id="ENST00000333047.9">
    <molecule id="Q13257-2"/>
    <property type="protein sequence ID" value="ENSP00000332295.5"/>
    <property type="gene ID" value="ENSG00000164109.14"/>
</dbReference>
<dbReference type="GeneID" id="4085"/>
<dbReference type="KEGG" id="hsa:4085"/>
<dbReference type="MANE-Select" id="ENST00000296509.11">
    <property type="protein sequence ID" value="ENSP00000296509.5"/>
    <property type="RefSeq nucleotide sequence ID" value="NM_002358.4"/>
    <property type="RefSeq protein sequence ID" value="NP_002349.1"/>
</dbReference>
<dbReference type="UCSC" id="uc003idl.3">
    <molecule id="Q13257-1"/>
    <property type="organism name" value="human"/>
</dbReference>
<dbReference type="AGR" id="HGNC:6763"/>
<dbReference type="CTD" id="4085"/>
<dbReference type="DisGeNET" id="4085"/>
<dbReference type="GeneCards" id="MAD2L1"/>
<dbReference type="HGNC" id="HGNC:6763">
    <property type="gene designation" value="MAD2L1"/>
</dbReference>
<dbReference type="HPA" id="ENSG00000164109">
    <property type="expression patterns" value="Tissue enhanced (bone marrow, lymphoid tissue)"/>
</dbReference>
<dbReference type="MIM" id="601467">
    <property type="type" value="gene"/>
</dbReference>
<dbReference type="neXtProt" id="NX_Q13257"/>
<dbReference type="OpenTargets" id="ENSG00000164109"/>
<dbReference type="PharmGKB" id="PA30521"/>
<dbReference type="VEuPathDB" id="HostDB:ENSG00000164109"/>
<dbReference type="eggNOG" id="KOG3285">
    <property type="taxonomic scope" value="Eukaryota"/>
</dbReference>
<dbReference type="GeneTree" id="ENSGT00940000153395"/>
<dbReference type="HOGENOM" id="CLU_072097_1_0_1"/>
<dbReference type="InParanoid" id="Q13257"/>
<dbReference type="OMA" id="EWLYECL"/>
<dbReference type="OrthoDB" id="1806at2759"/>
<dbReference type="PAN-GO" id="Q13257">
    <property type="GO annotations" value="4 GO annotations based on evolutionary models"/>
</dbReference>
<dbReference type="PhylomeDB" id="Q13257"/>
<dbReference type="TreeFam" id="TF101084"/>
<dbReference type="PathwayCommons" id="Q13257"/>
<dbReference type="Reactome" id="R-HSA-141405">
    <property type="pathway name" value="Inhibition of the proteolytic activity of APC/C required for the onset of anaphase by mitotic spindle checkpoint components"/>
</dbReference>
<dbReference type="Reactome" id="R-HSA-141430">
    <property type="pathway name" value="Inactivation of APC/C via direct inhibition of the APC/C complex"/>
</dbReference>
<dbReference type="Reactome" id="R-HSA-141444">
    <property type="pathway name" value="Amplification of signal from unattached kinetochores via a MAD2 inhibitory signal"/>
</dbReference>
<dbReference type="Reactome" id="R-HSA-174184">
    <property type="pathway name" value="Cdc20:Phospho-APC/C mediated degradation of Cyclin A"/>
</dbReference>
<dbReference type="Reactome" id="R-HSA-176409">
    <property type="pathway name" value="APC/C:Cdc20 mediated degradation of mitotic proteins"/>
</dbReference>
<dbReference type="Reactome" id="R-HSA-179409">
    <property type="pathway name" value="APC-Cdc20 mediated degradation of Nek2A"/>
</dbReference>
<dbReference type="Reactome" id="R-HSA-2467813">
    <property type="pathway name" value="Separation of Sister Chromatids"/>
</dbReference>
<dbReference type="Reactome" id="R-HSA-2500257">
    <property type="pathway name" value="Resolution of Sister Chromatid Cohesion"/>
</dbReference>
<dbReference type="Reactome" id="R-HSA-5663220">
    <property type="pathway name" value="RHO GTPases Activate Formins"/>
</dbReference>
<dbReference type="Reactome" id="R-HSA-68877">
    <property type="pathway name" value="Mitotic Prometaphase"/>
</dbReference>
<dbReference type="Reactome" id="R-HSA-9648025">
    <property type="pathway name" value="EML4 and NUDC in mitotic spindle formation"/>
</dbReference>
<dbReference type="SignaLink" id="Q13257"/>
<dbReference type="SIGNOR" id="Q13257"/>
<dbReference type="BioGRID-ORCS" id="4085">
    <property type="hits" value="774 hits in 1142 CRISPR screens"/>
</dbReference>
<dbReference type="CD-CODE" id="8C2F96ED">
    <property type="entry name" value="Centrosome"/>
</dbReference>
<dbReference type="ChiTaRS" id="MAD2L1">
    <property type="organism name" value="human"/>
</dbReference>
<dbReference type="EvolutionaryTrace" id="Q13257"/>
<dbReference type="GeneWiki" id="MAD2L1"/>
<dbReference type="GenomeRNAi" id="4085"/>
<dbReference type="Pharos" id="Q13257">
    <property type="development level" value="Tbio"/>
</dbReference>
<dbReference type="PRO" id="PR:Q13257"/>
<dbReference type="Proteomes" id="UP000005640">
    <property type="component" value="Chromosome 4"/>
</dbReference>
<dbReference type="RNAct" id="Q13257">
    <property type="molecule type" value="protein"/>
</dbReference>
<dbReference type="Bgee" id="ENSG00000164109">
    <property type="expression patterns" value="Expressed in secondary oocyte and 165 other cell types or tissues"/>
</dbReference>
<dbReference type="ExpressionAtlas" id="Q13257">
    <property type="expression patterns" value="baseline and differential"/>
</dbReference>
<dbReference type="GO" id="GO:0005737">
    <property type="term" value="C:cytoplasm"/>
    <property type="evidence" value="ECO:0000318"/>
    <property type="project" value="GO_Central"/>
</dbReference>
<dbReference type="GO" id="GO:0005829">
    <property type="term" value="C:cytosol"/>
    <property type="evidence" value="ECO:0000314"/>
    <property type="project" value="UniProtKB"/>
</dbReference>
<dbReference type="GO" id="GO:0000776">
    <property type="term" value="C:kinetochore"/>
    <property type="evidence" value="ECO:0000314"/>
    <property type="project" value="UniProtKB"/>
</dbReference>
<dbReference type="GO" id="GO:0033597">
    <property type="term" value="C:mitotic checkpoint complex"/>
    <property type="evidence" value="ECO:0000353"/>
    <property type="project" value="ComplexPortal"/>
</dbReference>
<dbReference type="GO" id="GO:0072686">
    <property type="term" value="C:mitotic spindle"/>
    <property type="evidence" value="ECO:0000314"/>
    <property type="project" value="UniProtKB"/>
</dbReference>
<dbReference type="GO" id="GO:1990728">
    <property type="term" value="C:mitotic spindle assembly checkpoint MAD1-MAD2 complex"/>
    <property type="evidence" value="ECO:0000353"/>
    <property type="project" value="ComplexPortal"/>
</dbReference>
<dbReference type="GO" id="GO:0044615">
    <property type="term" value="C:nuclear pore nuclear basket"/>
    <property type="evidence" value="ECO:0000314"/>
    <property type="project" value="UniProtKB"/>
</dbReference>
<dbReference type="GO" id="GO:0005654">
    <property type="term" value="C:nucleoplasm"/>
    <property type="evidence" value="ECO:0000314"/>
    <property type="project" value="HPA"/>
</dbReference>
<dbReference type="GO" id="GO:0005634">
    <property type="term" value="C:nucleus"/>
    <property type="evidence" value="ECO:0000314"/>
    <property type="project" value="UniProtKB"/>
</dbReference>
<dbReference type="GO" id="GO:0048471">
    <property type="term" value="C:perinuclear region of cytoplasm"/>
    <property type="evidence" value="ECO:0000314"/>
    <property type="project" value="UniProtKB"/>
</dbReference>
<dbReference type="GO" id="GO:0000922">
    <property type="term" value="C:spindle pole"/>
    <property type="evidence" value="ECO:0007669"/>
    <property type="project" value="UniProtKB-SubCell"/>
</dbReference>
<dbReference type="GO" id="GO:0042802">
    <property type="term" value="F:identical protein binding"/>
    <property type="evidence" value="ECO:0000353"/>
    <property type="project" value="IntAct"/>
</dbReference>
<dbReference type="GO" id="GO:0042803">
    <property type="term" value="F:protein homodimerization activity"/>
    <property type="evidence" value="ECO:0000353"/>
    <property type="project" value="UniProtKB"/>
</dbReference>
<dbReference type="GO" id="GO:0051301">
    <property type="term" value="P:cell division"/>
    <property type="evidence" value="ECO:0007669"/>
    <property type="project" value="UniProtKB-KW"/>
</dbReference>
<dbReference type="GO" id="GO:0051660">
    <property type="term" value="P:establishment of centrosome localization"/>
    <property type="evidence" value="ECO:0000315"/>
    <property type="project" value="UniProtKB"/>
</dbReference>
<dbReference type="GO" id="GO:0000132">
    <property type="term" value="P:establishment of mitotic spindle orientation"/>
    <property type="evidence" value="ECO:0000315"/>
    <property type="project" value="UniProtKB"/>
</dbReference>
<dbReference type="GO" id="GO:0000070">
    <property type="term" value="P:mitotic sister chromatid segregation"/>
    <property type="evidence" value="ECO:0007669"/>
    <property type="project" value="Ensembl"/>
</dbReference>
<dbReference type="GO" id="GO:0007094">
    <property type="term" value="P:mitotic spindle assembly checkpoint signaling"/>
    <property type="evidence" value="ECO:0000314"/>
    <property type="project" value="UniProtKB"/>
</dbReference>
<dbReference type="GO" id="GO:0045930">
    <property type="term" value="P:negative regulation of mitotic cell cycle"/>
    <property type="evidence" value="ECO:0000315"/>
    <property type="project" value="MGI"/>
</dbReference>
<dbReference type="GO" id="GO:0042177">
    <property type="term" value="P:negative regulation of protein catabolic process"/>
    <property type="evidence" value="ECO:0000314"/>
    <property type="project" value="UniProtKB"/>
</dbReference>
<dbReference type="GO" id="GO:1904667">
    <property type="term" value="P:negative regulation of ubiquitin protein ligase activity"/>
    <property type="evidence" value="ECO:0000314"/>
    <property type="project" value="UniProtKB"/>
</dbReference>
<dbReference type="GO" id="GO:0090267">
    <property type="term" value="P:positive regulation of mitotic cell cycle spindle assembly checkpoint"/>
    <property type="evidence" value="ECO:0000314"/>
    <property type="project" value="UniProtKB"/>
</dbReference>
<dbReference type="FunFam" id="3.30.900.10:FF:000002">
    <property type="entry name" value="Mitotic spindle assembly checkpoint protein MAD2A"/>
    <property type="match status" value="1"/>
</dbReference>
<dbReference type="Gene3D" id="3.30.900.10">
    <property type="entry name" value="HORMA domain"/>
    <property type="match status" value="1"/>
</dbReference>
<dbReference type="InterPro" id="IPR003511">
    <property type="entry name" value="HORMA_dom"/>
</dbReference>
<dbReference type="InterPro" id="IPR036570">
    <property type="entry name" value="HORMA_dom_sf"/>
</dbReference>
<dbReference type="InterPro" id="IPR045091">
    <property type="entry name" value="Mad2-like"/>
</dbReference>
<dbReference type="PANTHER" id="PTHR11842">
    <property type="entry name" value="MITOTIC SPINDLE ASSEMBLY CHECKPOINT PROTEIN MAD2"/>
    <property type="match status" value="1"/>
</dbReference>
<dbReference type="PANTHER" id="PTHR11842:SF11">
    <property type="entry name" value="MITOTIC SPINDLE ASSEMBLY CHECKPOINT PROTEIN MAD2A"/>
    <property type="match status" value="1"/>
</dbReference>
<dbReference type="Pfam" id="PF02301">
    <property type="entry name" value="HORMA"/>
    <property type="match status" value="1"/>
</dbReference>
<dbReference type="SUPFAM" id="SSF56019">
    <property type="entry name" value="The spindle assembly checkpoint protein mad2"/>
    <property type="match status" value="1"/>
</dbReference>
<dbReference type="PROSITE" id="PS50815">
    <property type="entry name" value="HORMA"/>
    <property type="match status" value="1"/>
</dbReference>
<accession>Q13257</accession>
<accession>Q53F56</accession>
<accession>Q548X9</accession>
<accession>Q6IRW7</accession>
<accession>Q8IZX3</accession>
<keyword id="KW-0002">3D-structure</keyword>
<keyword id="KW-0007">Acetylation</keyword>
<keyword id="KW-0025">Alternative splicing</keyword>
<keyword id="KW-0131">Cell cycle</keyword>
<keyword id="KW-0132">Cell division</keyword>
<keyword id="KW-0137">Centromere</keyword>
<keyword id="KW-0158">Chromosome</keyword>
<keyword id="KW-0963">Cytoplasm</keyword>
<keyword id="KW-0206">Cytoskeleton</keyword>
<keyword id="KW-0903">Direct protein sequencing</keyword>
<keyword id="KW-0995">Kinetochore</keyword>
<keyword id="KW-0498">Mitosis</keyword>
<keyword id="KW-0539">Nucleus</keyword>
<keyword id="KW-0597">Phosphoprotein</keyword>
<keyword id="KW-1267">Proteomics identification</keyword>
<keyword id="KW-1185">Reference proteome</keyword>
<gene>
    <name type="primary">MAD2L1</name>
    <name type="synonym">MAD2</name>
</gene>
<proteinExistence type="evidence at protein level"/>
<comment type="function">
    <text evidence="3 4 8 18">Component of the spindle-assembly checkpoint that prevents the onset of anaphase until all chromosomes are properly aligned at the metaphase plate (PubMed:15024386, PubMed:29162720). In the closed conformation (C-MAD2) forms a heterotetrameric complex with MAD1L1 at unattached kinetochores during prometaphase, the complex recruits open conformation molecules of MAD2L1 (O-MAD2) and then promotes the conversion of O-MAD2 to C-MAD2 (PubMed:29162720). Required for the execution of the mitotic checkpoint which monitors the process of kinetochore-spindle attachment and inhibits the activity of the anaphase promoting complex by sequestering CDC20 until all chromosomes are aligned at the metaphase plate (PubMed:10700282, PubMed:11804586, PubMed:15024386).</text>
</comment>
<comment type="subunit">
    <text evidence="2 3 4 5 6 7 8 9 10 11 12 13 14 15 16 17 18 19">Monomer and homodimer (PubMed:18022367, PubMed:18318601). Heterodimerizes with MAD2L1 in order to form a tetrameric MAD1L1-MAD2L1 core complex (PubMed:12006501, PubMed:12574116, PubMed:15024386, PubMed:18981471). In the closed and open conformation, interacts with MAD1L1 (PubMed:29162720). Formation of a heterotetrameric core complex containing two molecules each of MAD1L1 and of MAD2L1 promotes binding of another molecule of MAD2L1 to each MAD2L1, resulting in a heterohexamer (PubMed:12006501). Interacts with MAD2L1BP (PubMed:12456649, PubMed:18022368). Interacts with ADAM17/TACE (PubMed:10527948). Interacts with CDC20 (PubMed:10700282, PubMed:12574116, PubMed:18981471, PubMed:9637688). Dimeric MAD2L1 in the closed conformation interacts with CDC20 (PubMed:29162720). Monomeric MAD2L1 in the open conformation does not interact with CDC20 (PubMed:11804586). CDC20 competes with MAD1L1 for MAD2L1 binding (PubMed:11804586). In the closed conformation, interacts with BUB1B (PubMed:29162720). Interacts with TTK (PubMed:29162720). Interacts with TPR (PubMed:18981471). Binds to UBD (via ubiquitin-like 1 domain) during mitosis (PubMed:16495226, PubMed:25422469). Interacts with isoform 1 and isoform 2 of NEK2 (PubMed:20034488). Interacts with HSF1; this interaction occurs in mitosis (PubMed:18794143). Interacts with isoform 3 of MAD1L1; this interaction leads to the cytoplasmic sequestration of MAD2L1 (PubMed:19010891).</text>
</comment>
<comment type="interaction">
    <interactant intactId="EBI-78203">
        <id>Q13257</id>
    </interactant>
    <interactant intactId="EBI-78188">
        <id>P78536</id>
        <label>ADAM17</label>
    </interactant>
    <organismsDiffer>false</organismsDiffer>
    <experiments>3</experiments>
</comment>
<comment type="interaction">
    <interactant intactId="EBI-78203">
        <id>Q13257</id>
    </interactant>
    <interactant intactId="EBI-1001438">
        <id>O60566</id>
        <label>BUB1B</label>
    </interactant>
    <organismsDiffer>false</organismsDiffer>
    <experiments>14</experiments>
</comment>
<comment type="interaction">
    <interactant intactId="EBI-78203">
        <id>Q13257</id>
    </interactant>
    <interactant intactId="EBI-367462">
        <id>Q12834</id>
        <label>CDC20</label>
    </interactant>
    <organismsDiffer>false</organismsDiffer>
    <experiments>38</experiments>
</comment>
<comment type="interaction">
    <interactant intactId="EBI-78203">
        <id>Q13257</id>
    </interactant>
    <interactant intactId="EBI-994813">
        <id>P30260</id>
        <label>CDC27</label>
    </interactant>
    <organismsDiffer>false</organismsDiffer>
    <experiments>10</experiments>
</comment>
<comment type="interaction">
    <interactant intactId="EBI-78203">
        <id>Q13257</id>
    </interactant>
    <interactant intactId="EBI-12366971">
        <id>O75140-2</id>
        <label>DEPDC5</label>
    </interactant>
    <organismsDiffer>false</organismsDiffer>
    <experiments>3</experiments>
</comment>
<comment type="interaction">
    <interactant intactId="EBI-78203">
        <id>Q13257</id>
    </interactant>
    <interactant intactId="EBI-6255981">
        <id>Q7L775</id>
        <label>EPM2AIP1</label>
    </interactant>
    <organismsDiffer>false</organismsDiffer>
    <experiments>4</experiments>
</comment>
<comment type="interaction">
    <interactant intactId="EBI-78203">
        <id>Q13257</id>
    </interactant>
    <interactant intactId="EBI-9984921">
        <id>P06213-2</id>
        <label>INSR</label>
    </interactant>
    <organismsDiffer>false</organismsDiffer>
    <experiments>3</experiments>
</comment>
<comment type="interaction">
    <interactant intactId="EBI-78203">
        <id>Q13257</id>
    </interactant>
    <interactant intactId="EBI-751001">
        <id>Q14145</id>
        <label>KEAP1</label>
    </interactant>
    <organismsDiffer>false</organismsDiffer>
    <experiments>8</experiments>
</comment>
<comment type="interaction">
    <interactant intactId="EBI-78203">
        <id>Q13257</id>
    </interactant>
    <interactant intactId="EBI-742610">
        <id>Q9Y6D9</id>
        <label>MAD1L1</label>
    </interactant>
    <organismsDiffer>false</organismsDiffer>
    <experiments>50</experiments>
</comment>
<comment type="interaction">
    <interactant intactId="EBI-78203">
        <id>Q13257</id>
    </interactant>
    <interactant intactId="EBI-78203">
        <id>Q13257</id>
        <label>MAD2L1</label>
    </interactant>
    <organismsDiffer>false</organismsDiffer>
    <experiments>9</experiments>
</comment>
<comment type="interaction">
    <interactant intactId="EBI-78203">
        <id>Q13257</id>
    </interactant>
    <interactant intactId="EBI-712181">
        <id>Q15013</id>
        <label>MAD2L1BP</label>
    </interactant>
    <organismsDiffer>false</organismsDiffer>
    <experiments>20</experiments>
</comment>
<comment type="interaction">
    <interactant intactId="EBI-78203">
        <id>Q13257</id>
    </interactant>
    <interactant intactId="EBI-727004">
        <id>O00560</id>
        <label>SDCBP</label>
    </interactant>
    <organismsDiffer>false</organismsDiffer>
    <experiments>3</experiments>
</comment>
<comment type="interaction">
    <interactant intactId="EBI-78203">
        <id>Q13257</id>
    </interactant>
    <interactant intactId="EBI-989213">
        <id>Q562F6</id>
        <label>SGO2</label>
    </interactant>
    <organismsDiffer>false</organismsDiffer>
    <experiments>11</experiments>
</comment>
<comment type="interaction">
    <interactant intactId="EBI-78203">
        <id>Q13257</id>
    </interactant>
    <interactant intactId="EBI-739485">
        <id>Q9Y3Q8</id>
        <label>TSC22D4</label>
    </interactant>
    <organismsDiffer>false</organismsDiffer>
    <experiments>8</experiments>
</comment>
<comment type="subcellular location">
    <subcellularLocation>
        <location evidence="15">Nucleus</location>
    </subcellularLocation>
    <subcellularLocation>
        <location>Chromosome</location>
        <location>Centromere</location>
        <location>Kinetochore</location>
    </subcellularLocation>
    <subcellularLocation>
        <location evidence="15">Cytoplasm</location>
    </subcellularLocation>
    <subcellularLocation>
        <location>Cytoplasm</location>
        <location>Cytoskeleton</location>
        <location>Spindle pole</location>
    </subcellularLocation>
    <text evidence="15 23">Recruited by MAD1L1 to unattached kinetochores (Probable). Recruited to the nuclear pore complex by TPR during interphase. Recruited to kinetochores in late prometaphase after BUB1, CENPF, BUB1B and CENPE. Kinetochore association requires the presence of NEK2. Kinetochore association is repressed by UBD. Sequestered to the cytoplasm upon interaction with isoform 3 of MAD1L1 (PubMed:19010891).</text>
</comment>
<comment type="alternative products">
    <event type="alternative splicing"/>
    <isoform>
        <id>Q13257-1</id>
        <name>1</name>
        <sequence type="displayed"/>
    </isoform>
    <isoform>
        <id>Q13257-2</id>
        <name>2</name>
        <sequence type="described" ref="VSP_047644 VSP_047645"/>
    </isoform>
</comment>
<comment type="domain">
    <text evidence="3 4 5 8 12">The protein has two highly different native conformations, an inactive open conformation that cannot bind CDC20 and that predominates in cytosolic monomers, and an active closed conformation. The protein in the closed conformation preferentially dimerizes with another molecule in the open conformation, but can also form a dimer with a molecule in the closed conformation. Formation of a heterotetrameric core complex containing two molecules of MAD1L1 and of MAD2L1 in the closed conformation promotes binding of another molecule of MAD2L1 in the open conformation and the conversion of the open to the closed form, and thereby promotes interaction with CDC20.</text>
</comment>
<comment type="PTM">
    <text evidence="7 16">Phosphorylated on multiple serine residues. The level of phosphorylation varies during the cell cycle and is highest during mitosis. Phosphorylation abolishes interaction with MAD1L1 and reduces interaction with CDC20. Phosphorylated by NEK2.</text>
</comment>
<comment type="similarity">
    <text evidence="23">Belongs to the MAD2 family.</text>
</comment>
<comment type="online information" name="Atlas of Genetics and Cytogenetics in Oncology and Haematology">
    <link uri="https://atlasgeneticsoncology.org/gene/304/MAD2L1"/>
</comment>